<reference key="1">
    <citation type="journal article" date="2002" name="Environ. Microbiol.">
        <title>Complete genome sequence and comparative analysis of the metabolically versatile Pseudomonas putida KT2440.</title>
        <authorList>
            <person name="Nelson K.E."/>
            <person name="Weinel C."/>
            <person name="Paulsen I.T."/>
            <person name="Dodson R.J."/>
            <person name="Hilbert H."/>
            <person name="Martins dos Santos V.A.P."/>
            <person name="Fouts D.E."/>
            <person name="Gill S.R."/>
            <person name="Pop M."/>
            <person name="Holmes M."/>
            <person name="Brinkac L.M."/>
            <person name="Beanan M.J."/>
            <person name="DeBoy R.T."/>
            <person name="Daugherty S.C."/>
            <person name="Kolonay J.F."/>
            <person name="Madupu R."/>
            <person name="Nelson W.C."/>
            <person name="White O."/>
            <person name="Peterson J.D."/>
            <person name="Khouri H.M."/>
            <person name="Hance I."/>
            <person name="Chris Lee P."/>
            <person name="Holtzapple E.K."/>
            <person name="Scanlan D."/>
            <person name="Tran K."/>
            <person name="Moazzez A."/>
            <person name="Utterback T.R."/>
            <person name="Rizzo M."/>
            <person name="Lee K."/>
            <person name="Kosack D."/>
            <person name="Moestl D."/>
            <person name="Wedler H."/>
            <person name="Lauber J."/>
            <person name="Stjepandic D."/>
            <person name="Hoheisel J."/>
            <person name="Straetz M."/>
            <person name="Heim S."/>
            <person name="Kiewitz C."/>
            <person name="Eisen J.A."/>
            <person name="Timmis K.N."/>
            <person name="Duesterhoeft A."/>
            <person name="Tuemmler B."/>
            <person name="Fraser C.M."/>
        </authorList>
    </citation>
    <scope>NUCLEOTIDE SEQUENCE [LARGE SCALE GENOMIC DNA]</scope>
    <source>
        <strain>ATCC 47054 / DSM 6125 / CFBP 8728 / NCIMB 11950 / KT2440</strain>
    </source>
</reference>
<keyword id="KW-0997">Cell inner membrane</keyword>
<keyword id="KW-1003">Cell membrane</keyword>
<keyword id="KW-0350">Heme biosynthesis</keyword>
<keyword id="KW-0472">Membrane</keyword>
<keyword id="KW-1185">Reference proteome</keyword>
<keyword id="KW-0808">Transferase</keyword>
<keyword id="KW-0812">Transmembrane</keyword>
<keyword id="KW-1133">Transmembrane helix</keyword>
<dbReference type="EC" id="2.5.1.141" evidence="1"/>
<dbReference type="EMBL" id="AE015451">
    <property type="protein sequence ID" value="AAN66441.1"/>
    <property type="molecule type" value="Genomic_DNA"/>
</dbReference>
<dbReference type="RefSeq" id="NP_742977.1">
    <property type="nucleotide sequence ID" value="NC_002947.4"/>
</dbReference>
<dbReference type="SMR" id="Q88PN3"/>
<dbReference type="STRING" id="160488.PP_0816"/>
<dbReference type="PaxDb" id="160488-PP_0816"/>
<dbReference type="KEGG" id="ppu:PP_0816"/>
<dbReference type="PATRIC" id="fig|160488.4.peg.872"/>
<dbReference type="eggNOG" id="COG0109">
    <property type="taxonomic scope" value="Bacteria"/>
</dbReference>
<dbReference type="HOGENOM" id="CLU_029631_0_0_6"/>
<dbReference type="OrthoDB" id="9814417at2"/>
<dbReference type="PhylomeDB" id="Q88PN3"/>
<dbReference type="BioCyc" id="PPUT160488:G1G01-889-MONOMER"/>
<dbReference type="UniPathway" id="UPA00834">
    <property type="reaction ID" value="UER00712"/>
</dbReference>
<dbReference type="Proteomes" id="UP000000556">
    <property type="component" value="Chromosome"/>
</dbReference>
<dbReference type="GO" id="GO:0005886">
    <property type="term" value="C:plasma membrane"/>
    <property type="evidence" value="ECO:0007669"/>
    <property type="project" value="UniProtKB-SubCell"/>
</dbReference>
<dbReference type="GO" id="GO:0008495">
    <property type="term" value="F:protoheme IX farnesyltransferase activity"/>
    <property type="evidence" value="ECO:0007669"/>
    <property type="project" value="UniProtKB-UniRule"/>
</dbReference>
<dbReference type="GO" id="GO:0048034">
    <property type="term" value="P:heme O biosynthetic process"/>
    <property type="evidence" value="ECO:0007669"/>
    <property type="project" value="UniProtKB-UniRule"/>
</dbReference>
<dbReference type="CDD" id="cd13957">
    <property type="entry name" value="PT_UbiA_Cox10"/>
    <property type="match status" value="1"/>
</dbReference>
<dbReference type="FunFam" id="1.10.357.140:FF:000001">
    <property type="entry name" value="Protoheme IX farnesyltransferase"/>
    <property type="match status" value="1"/>
</dbReference>
<dbReference type="Gene3D" id="1.10.357.140">
    <property type="entry name" value="UbiA prenyltransferase"/>
    <property type="match status" value="1"/>
</dbReference>
<dbReference type="HAMAP" id="MF_00154">
    <property type="entry name" value="CyoE_CtaB"/>
    <property type="match status" value="1"/>
</dbReference>
<dbReference type="InterPro" id="IPR006369">
    <property type="entry name" value="Protohaem_IX_farnesylTrfase"/>
</dbReference>
<dbReference type="InterPro" id="IPR000537">
    <property type="entry name" value="UbiA_prenyltransferase"/>
</dbReference>
<dbReference type="InterPro" id="IPR030470">
    <property type="entry name" value="UbiA_prenylTrfase_CS"/>
</dbReference>
<dbReference type="InterPro" id="IPR044878">
    <property type="entry name" value="UbiA_sf"/>
</dbReference>
<dbReference type="NCBIfam" id="TIGR01473">
    <property type="entry name" value="cyoE_ctaB"/>
    <property type="match status" value="1"/>
</dbReference>
<dbReference type="NCBIfam" id="NF003348">
    <property type="entry name" value="PRK04375.1-1"/>
    <property type="match status" value="1"/>
</dbReference>
<dbReference type="PANTHER" id="PTHR43448">
    <property type="entry name" value="PROTOHEME IX FARNESYLTRANSFERASE, MITOCHONDRIAL"/>
    <property type="match status" value="1"/>
</dbReference>
<dbReference type="PANTHER" id="PTHR43448:SF2">
    <property type="entry name" value="PROTOHEME IX FARNESYLTRANSFERASE, MITOCHONDRIAL"/>
    <property type="match status" value="1"/>
</dbReference>
<dbReference type="Pfam" id="PF01040">
    <property type="entry name" value="UbiA"/>
    <property type="match status" value="1"/>
</dbReference>
<dbReference type="PROSITE" id="PS00943">
    <property type="entry name" value="UBIA"/>
    <property type="match status" value="1"/>
</dbReference>
<gene>
    <name evidence="1" type="primary">cyoE2</name>
    <name type="synonym">cyoE-2</name>
    <name type="ordered locus">PP_0816</name>
</gene>
<accession>Q88PN3</accession>
<name>CYOE2_PSEPK</name>
<organism>
    <name type="scientific">Pseudomonas putida (strain ATCC 47054 / DSM 6125 / CFBP 8728 / NCIMB 11950 / KT2440)</name>
    <dbReference type="NCBI Taxonomy" id="160488"/>
    <lineage>
        <taxon>Bacteria</taxon>
        <taxon>Pseudomonadati</taxon>
        <taxon>Pseudomonadota</taxon>
        <taxon>Gammaproteobacteria</taxon>
        <taxon>Pseudomonadales</taxon>
        <taxon>Pseudomonadaceae</taxon>
        <taxon>Pseudomonas</taxon>
    </lineage>
</organism>
<feature type="chain" id="PRO_0000326928" description="Protoheme IX farnesyltransferase 2">
    <location>
        <begin position="1"/>
        <end position="295"/>
    </location>
</feature>
<feature type="transmembrane region" description="Helical" evidence="1">
    <location>
        <begin position="9"/>
        <end position="29"/>
    </location>
</feature>
<feature type="transmembrane region" description="Helical" evidence="1">
    <location>
        <begin position="36"/>
        <end position="56"/>
    </location>
</feature>
<feature type="transmembrane region" description="Helical" evidence="1">
    <location>
        <begin position="83"/>
        <end position="103"/>
    </location>
</feature>
<feature type="transmembrane region" description="Helical" evidence="1">
    <location>
        <begin position="108"/>
        <end position="128"/>
    </location>
</feature>
<feature type="transmembrane region" description="Helical" evidence="1">
    <location>
        <begin position="135"/>
        <end position="155"/>
    </location>
</feature>
<feature type="transmembrane region" description="Helical" evidence="1">
    <location>
        <begin position="163"/>
        <end position="183"/>
    </location>
</feature>
<feature type="transmembrane region" description="Helical" evidence="1">
    <location>
        <begin position="209"/>
        <end position="229"/>
    </location>
</feature>
<feature type="transmembrane region" description="Helical" evidence="1">
    <location>
        <begin position="230"/>
        <end position="250"/>
    </location>
</feature>
<feature type="transmembrane region" description="Helical" evidence="1">
    <location>
        <begin position="264"/>
        <end position="284"/>
    </location>
</feature>
<proteinExistence type="inferred from homology"/>
<comment type="function">
    <text evidence="1">Converts heme B (protoheme IX) to heme O by substitution of the vinyl group on carbon 2 of heme B porphyrin ring with a hydroxyethyl farnesyl side group.</text>
</comment>
<comment type="catalytic activity">
    <reaction evidence="1">
        <text>heme b + (2E,6E)-farnesyl diphosphate + H2O = Fe(II)-heme o + diphosphate</text>
        <dbReference type="Rhea" id="RHEA:28070"/>
        <dbReference type="ChEBI" id="CHEBI:15377"/>
        <dbReference type="ChEBI" id="CHEBI:33019"/>
        <dbReference type="ChEBI" id="CHEBI:60344"/>
        <dbReference type="ChEBI" id="CHEBI:60530"/>
        <dbReference type="ChEBI" id="CHEBI:175763"/>
        <dbReference type="EC" id="2.5.1.141"/>
    </reaction>
</comment>
<comment type="pathway">
    <text evidence="1">Porphyrin-containing compound metabolism; heme O biosynthesis; heme O from protoheme: step 1/1.</text>
</comment>
<comment type="subcellular location">
    <subcellularLocation>
        <location evidence="1">Cell inner membrane</location>
        <topology evidence="1">Multi-pass membrane protein</topology>
    </subcellularLocation>
</comment>
<comment type="miscellaneous">
    <text evidence="1">Carbon 2 of the heme B porphyrin ring is defined according to the Fischer nomenclature.</text>
</comment>
<comment type="similarity">
    <text evidence="1">Belongs to the UbiA prenyltransferase family. Protoheme IX farnesyltransferase subfamily.</text>
</comment>
<evidence type="ECO:0000255" key="1">
    <source>
        <dbReference type="HAMAP-Rule" id="MF_00154"/>
    </source>
</evidence>
<protein>
    <recommendedName>
        <fullName evidence="1">Protoheme IX farnesyltransferase 2</fullName>
        <ecNumber evidence="1">2.5.1.141</ecNumber>
    </recommendedName>
    <alternativeName>
        <fullName evidence="1">Heme B farnesyltransferase 2</fullName>
    </alternativeName>
    <alternativeName>
        <fullName evidence="1">Heme O synthase 2</fullName>
    </alternativeName>
</protein>
<sequence length="295" mass="31750">MSVKHFIQITKPGIIFGNVLSVAGGFFLASKGHVDFALFLAVVIGTSLVVASGCVFNNCIDRDIDHKMERTKNRVMVQGGMSLPLALIYATLLGVAGFSLLYVQANPLSAFCALIGFVVYVGFYSLWLKRKSVHGTLVGSLSGAMPPVIGYCAVSNSFDLAAVTLLVMFSLWQMPHSFAIAIFRFKDYSAANIPVLPVARGILAAKKQIVLYVLAFVLATLMLTLGGYAGLGYLAVAAAMGLYWLYMAWGGYKAEDDSKWARKVFGFSILTVTALSVMMGVDSQTAADVLMTYAR</sequence>